<proteinExistence type="inferred from homology"/>
<name>RDGC_SHEB2</name>
<feature type="chain" id="PRO_1000193278" description="Recombination-associated protein RdgC">
    <location>
        <begin position="1"/>
        <end position="304"/>
    </location>
</feature>
<keyword id="KW-0963">Cytoplasm</keyword>
<keyword id="KW-0233">DNA recombination</keyword>
<dbReference type="EMBL" id="CP001252">
    <property type="protein sequence ID" value="ACK47469.1"/>
    <property type="molecule type" value="Genomic_DNA"/>
</dbReference>
<dbReference type="RefSeq" id="WP_006080902.1">
    <property type="nucleotide sequence ID" value="NC_011663.1"/>
</dbReference>
<dbReference type="SMR" id="B8EAS7"/>
<dbReference type="KEGG" id="sbp:Sbal223_2983"/>
<dbReference type="HOGENOM" id="CLU_052038_1_1_6"/>
<dbReference type="Proteomes" id="UP000002507">
    <property type="component" value="Chromosome"/>
</dbReference>
<dbReference type="GO" id="GO:0043590">
    <property type="term" value="C:bacterial nucleoid"/>
    <property type="evidence" value="ECO:0007669"/>
    <property type="project" value="TreeGrafter"/>
</dbReference>
<dbReference type="GO" id="GO:0005737">
    <property type="term" value="C:cytoplasm"/>
    <property type="evidence" value="ECO:0007669"/>
    <property type="project" value="UniProtKB-UniRule"/>
</dbReference>
<dbReference type="GO" id="GO:0003690">
    <property type="term" value="F:double-stranded DNA binding"/>
    <property type="evidence" value="ECO:0007669"/>
    <property type="project" value="TreeGrafter"/>
</dbReference>
<dbReference type="GO" id="GO:0006310">
    <property type="term" value="P:DNA recombination"/>
    <property type="evidence" value="ECO:0007669"/>
    <property type="project" value="UniProtKB-UniRule"/>
</dbReference>
<dbReference type="GO" id="GO:0000018">
    <property type="term" value="P:regulation of DNA recombination"/>
    <property type="evidence" value="ECO:0007669"/>
    <property type="project" value="TreeGrafter"/>
</dbReference>
<dbReference type="HAMAP" id="MF_00194">
    <property type="entry name" value="RdgC"/>
    <property type="match status" value="1"/>
</dbReference>
<dbReference type="InterPro" id="IPR007476">
    <property type="entry name" value="RdgC"/>
</dbReference>
<dbReference type="NCBIfam" id="NF001462">
    <property type="entry name" value="PRK00321.1-3"/>
    <property type="match status" value="1"/>
</dbReference>
<dbReference type="NCBIfam" id="NF001464">
    <property type="entry name" value="PRK00321.1-5"/>
    <property type="match status" value="1"/>
</dbReference>
<dbReference type="PANTHER" id="PTHR38103">
    <property type="entry name" value="RECOMBINATION-ASSOCIATED PROTEIN RDGC"/>
    <property type="match status" value="1"/>
</dbReference>
<dbReference type="PANTHER" id="PTHR38103:SF1">
    <property type="entry name" value="RECOMBINATION-ASSOCIATED PROTEIN RDGC"/>
    <property type="match status" value="1"/>
</dbReference>
<dbReference type="Pfam" id="PF04381">
    <property type="entry name" value="RdgC"/>
    <property type="match status" value="1"/>
</dbReference>
<protein>
    <recommendedName>
        <fullName evidence="1">Recombination-associated protein RdgC</fullName>
    </recommendedName>
</protein>
<gene>
    <name evidence="1" type="primary">rdgC</name>
    <name type="ordered locus">Sbal223_2983</name>
</gene>
<accession>B8EAS7</accession>
<comment type="function">
    <text evidence="1">May be involved in recombination.</text>
</comment>
<comment type="subcellular location">
    <subcellularLocation>
        <location evidence="1">Cytoplasm</location>
        <location evidence="1">Nucleoid</location>
    </subcellularLocation>
</comment>
<comment type="similarity">
    <text evidence="1">Belongs to the RdgC family.</text>
</comment>
<evidence type="ECO:0000255" key="1">
    <source>
        <dbReference type="HAMAP-Rule" id="MF_00194"/>
    </source>
</evidence>
<organism>
    <name type="scientific">Shewanella baltica (strain OS223)</name>
    <dbReference type="NCBI Taxonomy" id="407976"/>
    <lineage>
        <taxon>Bacteria</taxon>
        <taxon>Pseudomonadati</taxon>
        <taxon>Pseudomonadota</taxon>
        <taxon>Gammaproteobacteria</taxon>
        <taxon>Alteromonadales</taxon>
        <taxon>Shewanellaceae</taxon>
        <taxon>Shewanella</taxon>
    </lineage>
</organism>
<reference key="1">
    <citation type="submission" date="2008-12" db="EMBL/GenBank/DDBJ databases">
        <title>Complete sequence of chromosome of Shewanella baltica OS223.</title>
        <authorList>
            <consortium name="US DOE Joint Genome Institute"/>
            <person name="Lucas S."/>
            <person name="Copeland A."/>
            <person name="Lapidus A."/>
            <person name="Glavina del Rio T."/>
            <person name="Dalin E."/>
            <person name="Tice H."/>
            <person name="Bruce D."/>
            <person name="Goodwin L."/>
            <person name="Pitluck S."/>
            <person name="Chertkov O."/>
            <person name="Meincke L."/>
            <person name="Brettin T."/>
            <person name="Detter J.C."/>
            <person name="Han C."/>
            <person name="Kuske C.R."/>
            <person name="Larimer F."/>
            <person name="Land M."/>
            <person name="Hauser L."/>
            <person name="Kyrpides N."/>
            <person name="Ovchinnikova G."/>
            <person name="Brettar I."/>
            <person name="Rodrigues J."/>
            <person name="Konstantinidis K."/>
            <person name="Tiedje J."/>
        </authorList>
    </citation>
    <scope>NUCLEOTIDE SEQUENCE [LARGE SCALE GENOMIC DNA]</scope>
    <source>
        <strain>OS223</strain>
    </source>
</reference>
<sequence length="304" mass="33501">MWFKNLTLYRFNKPFAVETEALETALADFTFSPCSSQDVSKFGFSNALGKKGSSLVHSADNRHLICVTKEEKILPGQVIKEALEEKVALIEDEENRKMAKKEKDALKDEIITSLLPRAFSRRSQTHALILPELEMILVDSSSATKAEELLALLRKALGSLPVIPLSFKAPVESNLTEWLKLGSAPLPFEMQDEAELKSEADEGGIVRFKQQDLKEDEVLAHLATGKQVHKLALHFGQSIALLLQSDASVKRLKFSEEFRAGNDEVGTDDPMARLDADFALMGSELVALMHALVAALGGLEEAQV</sequence>